<organism>
    <name type="scientific">Nitrobacter winogradskyi (strain ATCC 25391 / DSM 10237 / CIP 104748 / NCIMB 11846 / Nb-255)</name>
    <dbReference type="NCBI Taxonomy" id="323098"/>
    <lineage>
        <taxon>Bacteria</taxon>
        <taxon>Pseudomonadati</taxon>
        <taxon>Pseudomonadota</taxon>
        <taxon>Alphaproteobacteria</taxon>
        <taxon>Hyphomicrobiales</taxon>
        <taxon>Nitrobacteraceae</taxon>
        <taxon>Nitrobacter</taxon>
    </lineage>
</organism>
<dbReference type="EMBL" id="CP000115">
    <property type="protein sequence ID" value="ABA05703.1"/>
    <property type="molecule type" value="Genomic_DNA"/>
</dbReference>
<dbReference type="RefSeq" id="WP_011315658.1">
    <property type="nucleotide sequence ID" value="NC_007406.1"/>
</dbReference>
<dbReference type="SMR" id="Q3SPT8"/>
<dbReference type="STRING" id="323098.Nwi_2450"/>
<dbReference type="KEGG" id="nwi:Nwi_2450"/>
<dbReference type="eggNOG" id="COG0782">
    <property type="taxonomic scope" value="Bacteria"/>
</dbReference>
<dbReference type="HOGENOM" id="CLU_101379_2_0_5"/>
<dbReference type="OrthoDB" id="9808774at2"/>
<dbReference type="Proteomes" id="UP000002531">
    <property type="component" value="Chromosome"/>
</dbReference>
<dbReference type="GO" id="GO:0003677">
    <property type="term" value="F:DNA binding"/>
    <property type="evidence" value="ECO:0007669"/>
    <property type="project" value="UniProtKB-UniRule"/>
</dbReference>
<dbReference type="GO" id="GO:0070063">
    <property type="term" value="F:RNA polymerase binding"/>
    <property type="evidence" value="ECO:0007669"/>
    <property type="project" value="InterPro"/>
</dbReference>
<dbReference type="GO" id="GO:0006354">
    <property type="term" value="P:DNA-templated transcription elongation"/>
    <property type="evidence" value="ECO:0007669"/>
    <property type="project" value="TreeGrafter"/>
</dbReference>
<dbReference type="GO" id="GO:0032784">
    <property type="term" value="P:regulation of DNA-templated transcription elongation"/>
    <property type="evidence" value="ECO:0007669"/>
    <property type="project" value="UniProtKB-UniRule"/>
</dbReference>
<dbReference type="FunFam" id="1.10.287.180:FF:000001">
    <property type="entry name" value="Transcription elongation factor GreA"/>
    <property type="match status" value="1"/>
</dbReference>
<dbReference type="FunFam" id="3.10.50.30:FF:000001">
    <property type="entry name" value="Transcription elongation factor GreA"/>
    <property type="match status" value="1"/>
</dbReference>
<dbReference type="Gene3D" id="3.10.50.30">
    <property type="entry name" value="Transcription elongation factor, GreA/GreB, C-terminal domain"/>
    <property type="match status" value="1"/>
</dbReference>
<dbReference type="Gene3D" id="1.10.287.180">
    <property type="entry name" value="Transcription elongation factor, GreA/GreB, N-terminal domain"/>
    <property type="match status" value="1"/>
</dbReference>
<dbReference type="HAMAP" id="MF_00105">
    <property type="entry name" value="GreA_GreB"/>
    <property type="match status" value="1"/>
</dbReference>
<dbReference type="InterPro" id="IPR036953">
    <property type="entry name" value="GreA/GreB_C_sf"/>
</dbReference>
<dbReference type="InterPro" id="IPR018151">
    <property type="entry name" value="TF_GreA/GreB_CS"/>
</dbReference>
<dbReference type="InterPro" id="IPR006359">
    <property type="entry name" value="Tscrpt_elong_fac_GreA"/>
</dbReference>
<dbReference type="InterPro" id="IPR028624">
    <property type="entry name" value="Tscrpt_elong_fac_GreA/B"/>
</dbReference>
<dbReference type="InterPro" id="IPR001437">
    <property type="entry name" value="Tscrpt_elong_fac_GreA/B_C"/>
</dbReference>
<dbReference type="InterPro" id="IPR023459">
    <property type="entry name" value="Tscrpt_elong_fac_GreA/B_fam"/>
</dbReference>
<dbReference type="InterPro" id="IPR022691">
    <property type="entry name" value="Tscrpt_elong_fac_GreA/B_N"/>
</dbReference>
<dbReference type="InterPro" id="IPR036805">
    <property type="entry name" value="Tscrpt_elong_fac_GreA/B_N_sf"/>
</dbReference>
<dbReference type="NCBIfam" id="TIGR01462">
    <property type="entry name" value="greA"/>
    <property type="match status" value="1"/>
</dbReference>
<dbReference type="NCBIfam" id="NF001261">
    <property type="entry name" value="PRK00226.1-2"/>
    <property type="match status" value="1"/>
</dbReference>
<dbReference type="NCBIfam" id="NF001263">
    <property type="entry name" value="PRK00226.1-4"/>
    <property type="match status" value="1"/>
</dbReference>
<dbReference type="NCBIfam" id="NF001264">
    <property type="entry name" value="PRK00226.1-5"/>
    <property type="match status" value="1"/>
</dbReference>
<dbReference type="PANTHER" id="PTHR30437">
    <property type="entry name" value="TRANSCRIPTION ELONGATION FACTOR GREA"/>
    <property type="match status" value="1"/>
</dbReference>
<dbReference type="PANTHER" id="PTHR30437:SF4">
    <property type="entry name" value="TRANSCRIPTION ELONGATION FACTOR GREA"/>
    <property type="match status" value="1"/>
</dbReference>
<dbReference type="Pfam" id="PF01272">
    <property type="entry name" value="GreA_GreB"/>
    <property type="match status" value="1"/>
</dbReference>
<dbReference type="Pfam" id="PF03449">
    <property type="entry name" value="GreA_GreB_N"/>
    <property type="match status" value="1"/>
</dbReference>
<dbReference type="PIRSF" id="PIRSF006092">
    <property type="entry name" value="GreA_GreB"/>
    <property type="match status" value="1"/>
</dbReference>
<dbReference type="SUPFAM" id="SSF54534">
    <property type="entry name" value="FKBP-like"/>
    <property type="match status" value="1"/>
</dbReference>
<dbReference type="SUPFAM" id="SSF46557">
    <property type="entry name" value="GreA transcript cleavage protein, N-terminal domain"/>
    <property type="match status" value="1"/>
</dbReference>
<dbReference type="PROSITE" id="PS00829">
    <property type="entry name" value="GREAB_1"/>
    <property type="match status" value="1"/>
</dbReference>
<feature type="chain" id="PRO_1000094179" description="Transcription elongation factor GreA">
    <location>
        <begin position="1"/>
        <end position="158"/>
    </location>
</feature>
<feature type="coiled-coil region" evidence="1">
    <location>
        <begin position="47"/>
        <end position="74"/>
    </location>
</feature>
<comment type="function">
    <text evidence="1">Necessary for efficient RNA polymerase transcription elongation past template-encoded arresting sites. The arresting sites in DNA have the property of trapping a certain fraction of elongating RNA polymerases that pass through, resulting in locked ternary complexes. Cleavage of the nascent transcript by cleavage factors such as GreA or GreB allows the resumption of elongation from the new 3'terminus. GreA releases sequences of 2 to 3 nucleotides.</text>
</comment>
<comment type="similarity">
    <text evidence="1">Belongs to the GreA/GreB family.</text>
</comment>
<gene>
    <name evidence="1" type="primary">greA</name>
    <name type="ordered locus">Nwi_2450</name>
</gene>
<sequence>MVEKVPMTRGGHAALADELKKRQSVDRPRIIEQIAEARAHGDLSENAEYHAAKEEQSHNEGRIAELEDKLARADIIDVSKLSGDTIKFGATVTLIDEDTDKKAVWQIVGEAEADAKQGRISITSPLARALIGKKKGSSVEVVAPGGAKAYEIAKVEWR</sequence>
<name>GREA_NITWN</name>
<protein>
    <recommendedName>
        <fullName evidence="1">Transcription elongation factor GreA</fullName>
    </recommendedName>
    <alternativeName>
        <fullName evidence="1">Transcript cleavage factor GreA</fullName>
    </alternativeName>
</protein>
<reference key="1">
    <citation type="journal article" date="2006" name="Appl. Environ. Microbiol.">
        <title>Genome sequence of the chemolithoautotrophic nitrite-oxidizing bacterium Nitrobacter winogradskyi Nb-255.</title>
        <authorList>
            <person name="Starkenburg S.R."/>
            <person name="Chain P.S.G."/>
            <person name="Sayavedra-Soto L.A."/>
            <person name="Hauser L."/>
            <person name="Land M.L."/>
            <person name="Larimer F.W."/>
            <person name="Malfatti S.A."/>
            <person name="Klotz M.G."/>
            <person name="Bottomley P.J."/>
            <person name="Arp D.J."/>
            <person name="Hickey W.J."/>
        </authorList>
    </citation>
    <scope>NUCLEOTIDE SEQUENCE [LARGE SCALE GENOMIC DNA]</scope>
    <source>
        <strain>ATCC 25391 / DSM 10237 / CIP 104748 / NCIMB 11846 / Nb-255</strain>
    </source>
</reference>
<proteinExistence type="inferred from homology"/>
<keyword id="KW-0175">Coiled coil</keyword>
<keyword id="KW-0238">DNA-binding</keyword>
<keyword id="KW-1185">Reference proteome</keyword>
<keyword id="KW-0804">Transcription</keyword>
<keyword id="KW-0805">Transcription regulation</keyword>
<accession>Q3SPT8</accession>
<evidence type="ECO:0000255" key="1">
    <source>
        <dbReference type="HAMAP-Rule" id="MF_00105"/>
    </source>
</evidence>